<keyword id="KW-0067">ATP-binding</keyword>
<keyword id="KW-0119">Carbohydrate metabolism</keyword>
<keyword id="KW-0903">Direct protein sequencing</keyword>
<keyword id="KW-0418">Kinase</keyword>
<keyword id="KW-0547">Nucleotide-binding</keyword>
<keyword id="KW-0808">Transferase</keyword>
<evidence type="ECO:0000269" key="1">
    <source>
    </source>
</evidence>
<evidence type="ECO:0000305" key="2"/>
<comment type="function">
    <text evidence="1">Catalyzes the ATP-dependent phosphorylation of a wide variety of beta-D-glucosides, to produce 6-phospho-beta-D-glucosides including cellobiose-6'-P, gentiobiose-6'-P, cellobiitol-6-P, salicin-6-P, and arbutin-6-P. Is not able to phosphorylate alpha-D-glucosides. May have a dual role of kinase and transcriptional regulator of the cellobiose-PTS operon.</text>
</comment>
<comment type="catalytic activity">
    <reaction evidence="1">
        <text>D-cellobiose + ATP = 6-phospho-beta-D-glucosyl-(1-&gt;4)-D-glucose + ADP + H(+)</text>
        <dbReference type="Rhea" id="RHEA:21944"/>
        <dbReference type="ChEBI" id="CHEBI:15378"/>
        <dbReference type="ChEBI" id="CHEBI:17057"/>
        <dbReference type="ChEBI" id="CHEBI:30616"/>
        <dbReference type="ChEBI" id="CHEBI:58312"/>
        <dbReference type="ChEBI" id="CHEBI:456216"/>
        <dbReference type="EC" id="2.7.1.85"/>
    </reaction>
</comment>
<comment type="activity regulation">
    <text evidence="1">Is inhibited by N-ethylmaleimide in vitro, but ATP affords considerable protection against the inhibitor.</text>
</comment>
<comment type="biophysicochemical properties">
    <kinetics>
        <KM>0.11 mM for n-octyl-beta-D-glucopyranoside</KM>
        <KM>0.18 mM for salicin</KM>
        <KM>0.21 mM for arbutin</KM>
        <KM>0.47 mM for cellobiose</KM>
        <KM>0.47 mM for amygdalin</KM>
        <KM>0.56 mM for gentiobiose</KM>
        <KM>0.63 mM for laminaribiose</KM>
        <KM>0.65 mM for phenyl-beta-D-glucopyranoside</KM>
        <KM>1.56 mM for cellobiitol</KM>
        <KM>2.03 mM for isopropyl-beta-D-thioglucopyranoside</KM>
        <KM>2.23 mM for methyl-beta-D-glucopyranoside</KM>
        <KM>3.15 mM for sophorose</KM>
        <KM>10.54 mM for thiocellobiose</KM>
        <KM>40.29 mM for glucose</KM>
        <KM>0.24 mM for ATP</KM>
        <Vmax>106.81 umol/min/mg enzyme with n-octyl-beta-D-glucopyranoside as substrate</Vmax>
        <Vmax>102.42 umol/min/mg enzyme with salicin as substrate</Vmax>
        <Vmax>131.23 umol/min/mg enzyme with arbutin as substrate</Vmax>
        <Vmax>86.82 umol/min/mg enzyme with cellobiose as substrate</Vmax>
        <Vmax>94.21 umol/min/mg enzyme with amygdalin as substrate</Vmax>
        <Vmax>74.59 umol/min/mg enzyme with gentiobiose as substrate</Vmax>
        <Vmax>121.23 umol/min/mg enzyme with laminaribiose as substrate</Vmax>
        <Vmax>150.0 umol/min/mg enzyme with phenyl-beta-D-glucopyranoside as substrate</Vmax>
        <Vmax>85.72 umol/min/mg enzyme with cellobiitol as substrate</Vmax>
        <Vmax>107.3 umol/min/mg enzyme with isopropyl-beta-D-thioglucopyranoside as substrate</Vmax>
        <Vmax>132.12 umol/min/mg enzyme with methyl-beta-D-glucopyranoside as substrate</Vmax>
        <Vmax>105.46 umol/min/mg enzyme with sophorose as substrate</Vmax>
        <Vmax>49.27 umol/min/mg enzyme with thiocellobiose as substrate</Vmax>
        <Vmax>86.29 umol/min/mg enzyme with glucose as substrate</Vmax>
    </kinetics>
</comment>
<comment type="subunit">
    <text evidence="1">Homotetramer.</text>
</comment>
<comment type="induction">
    <text evidence="1">Highly induced by cellobiose. To a lesser extent, is also induced by gentiobiose, cellobiitol, and methyl-beta-glucoside, but not by arbutin, salicin, esculin or phenyl-beta-glucoside.</text>
</comment>
<comment type="similarity">
    <text evidence="2">Belongs to the ROK (NagC/XylR) family.</text>
</comment>
<protein>
    <recommendedName>
        <fullName>Beta-glucoside kinase</fullName>
        <ecNumber>2.7.1.85</ecNumber>
    </recommendedName>
</protein>
<accession>Q93LQ8</accession>
<proteinExistence type="evidence at protein level"/>
<name>BGLK_KLEPN</name>
<sequence length="297" mass="32697">MKIAAFDIGGTALKMGVMARDGRLLETARQSINDSDGDRILQAMLSWLAAHPSCEGIAISAPGYIDPHSGLITMGGAIRRFDNFAMKSWLETRTGLPVSVENDANCVLLAERWQGKAAEMANFLVLTIGTGIGGAIFCQHQLINGARFRAGEFGYMLTDRPGGRDPRRYSMNENCTLRVLRHRYAQHIGAPLDSVTGELIFDRYDAGDPVCQRLVAEFFNGLGHGLYNLVHIFDPQTIFIGGGVVERPGFLTLLRQHLAWFGIADYLDTVSHGNDAGLIGAVYHFNQLYRSPDDDRH</sequence>
<gene>
    <name type="primary">bglK</name>
</gene>
<feature type="chain" id="PRO_0000390475" description="Beta-glucoside kinase">
    <location>
        <begin position="1"/>
        <end position="297"/>
    </location>
</feature>
<feature type="binding site" evidence="2">
    <location>
        <begin position="5"/>
        <end position="11"/>
    </location>
    <ligand>
        <name>ATP</name>
        <dbReference type="ChEBI" id="CHEBI:30616"/>
    </ligand>
</feature>
<feature type="mutagenesis site" description="Loss of catalytic activity." evidence="1">
    <original>D</original>
    <variation>G</variation>
    <location>
        <position position="7"/>
    </location>
</feature>
<feature type="mutagenesis site" description="Loss of catalytic activity." evidence="1">
    <original>G</original>
    <variation>A</variation>
    <location>
        <position position="9"/>
    </location>
</feature>
<feature type="mutagenesis site" description="Loss of catalytic activity." evidence="1">
    <original>D</original>
    <variation>G</variation>
    <location>
        <position position="103"/>
    </location>
</feature>
<feature type="mutagenesis site" description="Loss of catalytic activity." evidence="1">
    <original>G</original>
    <variation>A</variation>
    <location>
        <position position="131"/>
    </location>
</feature>
<feature type="mutagenesis site" description="Loss of catalytic activity." evidence="1">
    <original>G</original>
    <variation>A</variation>
    <location>
        <position position="133"/>
    </location>
</feature>
<reference key="1">
    <citation type="journal article" date="2002" name="J. Biol. Chem.">
        <title>Beta-glucoside kinase (BglK) from Klebsiella pneumoniae. Purification, properties, and preparative synthesis of 6-phospho-beta-D-glucosides.</title>
        <authorList>
            <person name="Thompson J."/>
            <person name="Lichtenthaler F.W."/>
            <person name="Peters S."/>
            <person name="Pikis A."/>
        </authorList>
    </citation>
    <scope>NUCLEOTIDE SEQUENCE [GENOMIC DNA]</scope>
    <scope>PROTEIN SEQUENCE OF 1-28</scope>
    <scope>CATALYTIC ACTIVITY</scope>
    <scope>FUNCTION</scope>
    <scope>SUBSTRATE SPECIFICITY</scope>
    <scope>ACTIVITY REGULATION</scope>
    <scope>SUBUNIT</scope>
    <scope>INDUCTION</scope>
    <scope>MUTAGENESIS OF ASP-7; GLY-9; ASP-103; GLY-131 AND GLY-133</scope>
    <source>
        <strain>ATCC 23357 / A-11</strain>
    </source>
</reference>
<organism>
    <name type="scientific">Klebsiella pneumoniae</name>
    <dbReference type="NCBI Taxonomy" id="573"/>
    <lineage>
        <taxon>Bacteria</taxon>
        <taxon>Pseudomonadati</taxon>
        <taxon>Pseudomonadota</taxon>
        <taxon>Gammaproteobacteria</taxon>
        <taxon>Enterobacterales</taxon>
        <taxon>Enterobacteriaceae</taxon>
        <taxon>Klebsiella/Raoultella group</taxon>
        <taxon>Klebsiella</taxon>
        <taxon>Klebsiella pneumoniae complex</taxon>
    </lineage>
</organism>
<dbReference type="EC" id="2.7.1.85"/>
<dbReference type="EMBL" id="AY035305">
    <property type="protein sequence ID" value="AAK58463.1"/>
    <property type="molecule type" value="Genomic_DNA"/>
</dbReference>
<dbReference type="RefSeq" id="WP_002913833.1">
    <property type="nucleotide sequence ID" value="NZ_WYAM01000007.1"/>
</dbReference>
<dbReference type="SMR" id="Q93LQ8"/>
<dbReference type="GO" id="GO:0005524">
    <property type="term" value="F:ATP binding"/>
    <property type="evidence" value="ECO:0007669"/>
    <property type="project" value="UniProtKB-KW"/>
</dbReference>
<dbReference type="GO" id="GO:0047700">
    <property type="term" value="F:beta-glucoside kinase activity"/>
    <property type="evidence" value="ECO:0007669"/>
    <property type="project" value="UniProtKB-EC"/>
</dbReference>
<dbReference type="CDD" id="cd24068">
    <property type="entry name" value="ASKHA_NBD_ROK_FnNanK-like"/>
    <property type="match status" value="1"/>
</dbReference>
<dbReference type="Gene3D" id="3.30.420.40">
    <property type="match status" value="2"/>
</dbReference>
<dbReference type="InterPro" id="IPR043129">
    <property type="entry name" value="ATPase_NBD"/>
</dbReference>
<dbReference type="InterPro" id="IPR000600">
    <property type="entry name" value="ROK"/>
</dbReference>
<dbReference type="InterPro" id="IPR053583">
    <property type="entry name" value="ROK_beta-glucoside_kinase"/>
</dbReference>
<dbReference type="NCBIfam" id="NF042998">
    <property type="entry name" value="bglucokin_BglK"/>
    <property type="match status" value="1"/>
</dbReference>
<dbReference type="PANTHER" id="PTHR18964:SF165">
    <property type="entry name" value="BETA-GLUCOSIDE KINASE"/>
    <property type="match status" value="1"/>
</dbReference>
<dbReference type="PANTHER" id="PTHR18964">
    <property type="entry name" value="ROK (REPRESSOR, ORF, KINASE) FAMILY"/>
    <property type="match status" value="1"/>
</dbReference>
<dbReference type="Pfam" id="PF00480">
    <property type="entry name" value="ROK"/>
    <property type="match status" value="1"/>
</dbReference>
<dbReference type="SUPFAM" id="SSF53067">
    <property type="entry name" value="Actin-like ATPase domain"/>
    <property type="match status" value="1"/>
</dbReference>